<name>RL16_CAMJR</name>
<comment type="function">
    <text evidence="1">Binds 23S rRNA and is also seen to make contacts with the A and possibly P site tRNAs.</text>
</comment>
<comment type="subunit">
    <text evidence="1">Part of the 50S ribosomal subunit.</text>
</comment>
<comment type="similarity">
    <text evidence="1">Belongs to the universal ribosomal protein uL16 family.</text>
</comment>
<keyword id="KW-0687">Ribonucleoprotein</keyword>
<keyword id="KW-0689">Ribosomal protein</keyword>
<keyword id="KW-0694">RNA-binding</keyword>
<keyword id="KW-0699">rRNA-binding</keyword>
<keyword id="KW-0820">tRNA-binding</keyword>
<evidence type="ECO:0000255" key="1">
    <source>
        <dbReference type="HAMAP-Rule" id="MF_01342"/>
    </source>
</evidence>
<evidence type="ECO:0000305" key="2"/>
<sequence>MLMPKRTKYRKMMKGRNRGYANRGTEFTFGEFALKATEAGRINSRQIEAARIALTRFVKRQGKTWIRVFPDKPLTKKPLETRMGKGKGAVEEWVMNIKPGRIIYEMAGVSEEMAREALTLAMHKLPFKTKFVTRESQNEIY</sequence>
<accession>Q5HS97</accession>
<dbReference type="EMBL" id="CP000025">
    <property type="protein sequence ID" value="AAW36290.1"/>
    <property type="molecule type" value="Genomic_DNA"/>
</dbReference>
<dbReference type="RefSeq" id="WP_002779441.1">
    <property type="nucleotide sequence ID" value="NC_003912.7"/>
</dbReference>
<dbReference type="SMR" id="Q5HS97"/>
<dbReference type="GeneID" id="66544936"/>
<dbReference type="KEGG" id="cjr:CJE1868"/>
<dbReference type="HOGENOM" id="CLU_078858_2_1_7"/>
<dbReference type="GO" id="GO:0022625">
    <property type="term" value="C:cytosolic large ribosomal subunit"/>
    <property type="evidence" value="ECO:0007669"/>
    <property type="project" value="TreeGrafter"/>
</dbReference>
<dbReference type="GO" id="GO:0019843">
    <property type="term" value="F:rRNA binding"/>
    <property type="evidence" value="ECO:0007669"/>
    <property type="project" value="UniProtKB-UniRule"/>
</dbReference>
<dbReference type="GO" id="GO:0003735">
    <property type="term" value="F:structural constituent of ribosome"/>
    <property type="evidence" value="ECO:0007669"/>
    <property type="project" value="InterPro"/>
</dbReference>
<dbReference type="GO" id="GO:0000049">
    <property type="term" value="F:tRNA binding"/>
    <property type="evidence" value="ECO:0007669"/>
    <property type="project" value="UniProtKB-KW"/>
</dbReference>
<dbReference type="GO" id="GO:0006412">
    <property type="term" value="P:translation"/>
    <property type="evidence" value="ECO:0007669"/>
    <property type="project" value="UniProtKB-UniRule"/>
</dbReference>
<dbReference type="CDD" id="cd01433">
    <property type="entry name" value="Ribosomal_L16_L10e"/>
    <property type="match status" value="1"/>
</dbReference>
<dbReference type="FunFam" id="3.90.1170.10:FF:000001">
    <property type="entry name" value="50S ribosomal protein L16"/>
    <property type="match status" value="1"/>
</dbReference>
<dbReference type="Gene3D" id="3.90.1170.10">
    <property type="entry name" value="Ribosomal protein L10e/L16"/>
    <property type="match status" value="1"/>
</dbReference>
<dbReference type="HAMAP" id="MF_01342">
    <property type="entry name" value="Ribosomal_uL16"/>
    <property type="match status" value="1"/>
</dbReference>
<dbReference type="InterPro" id="IPR047873">
    <property type="entry name" value="Ribosomal_uL16"/>
</dbReference>
<dbReference type="InterPro" id="IPR000114">
    <property type="entry name" value="Ribosomal_uL16_bact-type"/>
</dbReference>
<dbReference type="InterPro" id="IPR020798">
    <property type="entry name" value="Ribosomal_uL16_CS"/>
</dbReference>
<dbReference type="InterPro" id="IPR016180">
    <property type="entry name" value="Ribosomal_uL16_dom"/>
</dbReference>
<dbReference type="InterPro" id="IPR036920">
    <property type="entry name" value="Ribosomal_uL16_sf"/>
</dbReference>
<dbReference type="NCBIfam" id="TIGR01164">
    <property type="entry name" value="rplP_bact"/>
    <property type="match status" value="1"/>
</dbReference>
<dbReference type="PANTHER" id="PTHR12220">
    <property type="entry name" value="50S/60S RIBOSOMAL PROTEIN L16"/>
    <property type="match status" value="1"/>
</dbReference>
<dbReference type="PANTHER" id="PTHR12220:SF13">
    <property type="entry name" value="LARGE RIBOSOMAL SUBUNIT PROTEIN UL16M"/>
    <property type="match status" value="1"/>
</dbReference>
<dbReference type="Pfam" id="PF00252">
    <property type="entry name" value="Ribosomal_L16"/>
    <property type="match status" value="1"/>
</dbReference>
<dbReference type="PRINTS" id="PR00060">
    <property type="entry name" value="RIBOSOMALL16"/>
</dbReference>
<dbReference type="SUPFAM" id="SSF54686">
    <property type="entry name" value="Ribosomal protein L16p/L10e"/>
    <property type="match status" value="1"/>
</dbReference>
<dbReference type="PROSITE" id="PS00701">
    <property type="entry name" value="RIBOSOMAL_L16_2"/>
    <property type="match status" value="1"/>
</dbReference>
<feature type="chain" id="PRO_0000062071" description="Large ribosomal subunit protein uL16">
    <location>
        <begin position="1"/>
        <end position="141"/>
    </location>
</feature>
<proteinExistence type="inferred from homology"/>
<protein>
    <recommendedName>
        <fullName evidence="1">Large ribosomal subunit protein uL16</fullName>
    </recommendedName>
    <alternativeName>
        <fullName evidence="2">50S ribosomal protein L16</fullName>
    </alternativeName>
</protein>
<organism>
    <name type="scientific">Campylobacter jejuni (strain RM1221)</name>
    <dbReference type="NCBI Taxonomy" id="195099"/>
    <lineage>
        <taxon>Bacteria</taxon>
        <taxon>Pseudomonadati</taxon>
        <taxon>Campylobacterota</taxon>
        <taxon>Epsilonproteobacteria</taxon>
        <taxon>Campylobacterales</taxon>
        <taxon>Campylobacteraceae</taxon>
        <taxon>Campylobacter</taxon>
    </lineage>
</organism>
<reference key="1">
    <citation type="journal article" date="2005" name="PLoS Biol.">
        <title>Major structural differences and novel potential virulence mechanisms from the genomes of multiple Campylobacter species.</title>
        <authorList>
            <person name="Fouts D.E."/>
            <person name="Mongodin E.F."/>
            <person name="Mandrell R.E."/>
            <person name="Miller W.G."/>
            <person name="Rasko D.A."/>
            <person name="Ravel J."/>
            <person name="Brinkac L.M."/>
            <person name="DeBoy R.T."/>
            <person name="Parker C.T."/>
            <person name="Daugherty S.C."/>
            <person name="Dodson R.J."/>
            <person name="Durkin A.S."/>
            <person name="Madupu R."/>
            <person name="Sullivan S.A."/>
            <person name="Shetty J.U."/>
            <person name="Ayodeji M.A."/>
            <person name="Shvartsbeyn A."/>
            <person name="Schatz M.C."/>
            <person name="Badger J.H."/>
            <person name="Fraser C.M."/>
            <person name="Nelson K.E."/>
        </authorList>
    </citation>
    <scope>NUCLEOTIDE SEQUENCE [LARGE SCALE GENOMIC DNA]</scope>
    <source>
        <strain>RM1221</strain>
    </source>
</reference>
<gene>
    <name evidence="1" type="primary">rplP</name>
    <name type="ordered locus">CJE1868</name>
</gene>